<dbReference type="EC" id="2.3.2.27"/>
<dbReference type="EMBL" id="AY740619">
    <property type="protein sequence ID" value="AAW72447.1"/>
    <property type="molecule type" value="mRNA"/>
</dbReference>
<dbReference type="EMBL" id="AY843514">
    <property type="protein sequence ID" value="AAV91985.1"/>
    <property type="molecule type" value="Genomic_DNA"/>
</dbReference>
<dbReference type="SMR" id="Q5D7I3"/>
<dbReference type="UniPathway" id="UPA00143"/>
<dbReference type="GO" id="GO:0005634">
    <property type="term" value="C:nucleus"/>
    <property type="evidence" value="ECO:0007669"/>
    <property type="project" value="UniProtKB-SubCell"/>
</dbReference>
<dbReference type="GO" id="GO:0000932">
    <property type="term" value="C:P-body"/>
    <property type="evidence" value="ECO:0000250"/>
    <property type="project" value="UniProtKB"/>
</dbReference>
<dbReference type="GO" id="GO:0038187">
    <property type="term" value="F:pattern recognition receptor activity"/>
    <property type="evidence" value="ECO:0000250"/>
    <property type="project" value="UniProtKB"/>
</dbReference>
<dbReference type="GO" id="GO:0004842">
    <property type="term" value="F:ubiquitin-protein transferase activity"/>
    <property type="evidence" value="ECO:0000250"/>
    <property type="project" value="UniProtKB"/>
</dbReference>
<dbReference type="GO" id="GO:0008270">
    <property type="term" value="F:zinc ion binding"/>
    <property type="evidence" value="ECO:0007669"/>
    <property type="project" value="UniProtKB-KW"/>
</dbReference>
<dbReference type="GO" id="GO:0002218">
    <property type="term" value="P:activation of innate immune response"/>
    <property type="evidence" value="ECO:0000250"/>
    <property type="project" value="UniProtKB"/>
</dbReference>
<dbReference type="GO" id="GO:0006914">
    <property type="term" value="P:autophagy"/>
    <property type="evidence" value="ECO:0007669"/>
    <property type="project" value="UniProtKB-KW"/>
</dbReference>
<dbReference type="GO" id="GO:0051607">
    <property type="term" value="P:defense response to virus"/>
    <property type="evidence" value="ECO:0007669"/>
    <property type="project" value="UniProtKB-KW"/>
</dbReference>
<dbReference type="GO" id="GO:0045087">
    <property type="term" value="P:innate immune response"/>
    <property type="evidence" value="ECO:0007669"/>
    <property type="project" value="UniProtKB-KW"/>
</dbReference>
<dbReference type="GO" id="GO:0043123">
    <property type="term" value="P:positive regulation of canonical NF-kappaB signal transduction"/>
    <property type="evidence" value="ECO:0000250"/>
    <property type="project" value="UniProtKB"/>
</dbReference>
<dbReference type="GO" id="GO:0043410">
    <property type="term" value="P:positive regulation of MAPK cascade"/>
    <property type="evidence" value="ECO:0000250"/>
    <property type="project" value="UniProtKB"/>
</dbReference>
<dbReference type="GO" id="GO:0051092">
    <property type="term" value="P:positive regulation of NF-kappaB transcription factor activity"/>
    <property type="evidence" value="ECO:0000250"/>
    <property type="project" value="UniProtKB"/>
</dbReference>
<dbReference type="GO" id="GO:0070534">
    <property type="term" value="P:protein K63-linked ubiquitination"/>
    <property type="evidence" value="ECO:0000250"/>
    <property type="project" value="UniProtKB"/>
</dbReference>
<dbReference type="GO" id="GO:0031664">
    <property type="term" value="P:regulation of lipopolysaccharide-mediated signaling pathway"/>
    <property type="evidence" value="ECO:0000250"/>
    <property type="project" value="UniProtKB"/>
</dbReference>
<dbReference type="CDD" id="cd19761">
    <property type="entry name" value="Bbox2_TRIM5-like"/>
    <property type="match status" value="1"/>
</dbReference>
<dbReference type="CDD" id="cd16591">
    <property type="entry name" value="RING-HC_TRIM5-like_C-IV"/>
    <property type="match status" value="1"/>
</dbReference>
<dbReference type="CDD" id="cd15822">
    <property type="entry name" value="SPRY_PRY_TRIM5"/>
    <property type="match status" value="1"/>
</dbReference>
<dbReference type="FunFam" id="2.60.120.920:FF:000023">
    <property type="entry name" value="Tripartite motif-containing 5 (Predicted)"/>
    <property type="match status" value="1"/>
</dbReference>
<dbReference type="FunFam" id="3.30.160.60:FF:000386">
    <property type="entry name" value="Tripartite motif-containing 5 (Predicted)"/>
    <property type="match status" value="1"/>
</dbReference>
<dbReference type="FunFam" id="3.30.40.10:FF:000144">
    <property type="entry name" value="Tripartite motif-containing 5 (Predicted)"/>
    <property type="match status" value="1"/>
</dbReference>
<dbReference type="Gene3D" id="2.60.120.920">
    <property type="match status" value="1"/>
</dbReference>
<dbReference type="Gene3D" id="3.30.160.60">
    <property type="entry name" value="Classic Zinc Finger"/>
    <property type="match status" value="1"/>
</dbReference>
<dbReference type="Gene3D" id="3.30.40.10">
    <property type="entry name" value="Zinc/RING finger domain, C3HC4 (zinc finger)"/>
    <property type="match status" value="1"/>
</dbReference>
<dbReference type="InterPro" id="IPR001870">
    <property type="entry name" value="B30.2/SPRY"/>
</dbReference>
<dbReference type="InterPro" id="IPR043136">
    <property type="entry name" value="B30.2/SPRY_sf"/>
</dbReference>
<dbReference type="InterPro" id="IPR003879">
    <property type="entry name" value="Butyrophylin_SPRY"/>
</dbReference>
<dbReference type="InterPro" id="IPR013320">
    <property type="entry name" value="ConA-like_dom_sf"/>
</dbReference>
<dbReference type="InterPro" id="IPR003877">
    <property type="entry name" value="SPRY_dom"/>
</dbReference>
<dbReference type="InterPro" id="IPR050143">
    <property type="entry name" value="TRIM/RBCC"/>
</dbReference>
<dbReference type="InterPro" id="IPR027370">
    <property type="entry name" value="Znf-RING_euk"/>
</dbReference>
<dbReference type="InterPro" id="IPR000315">
    <property type="entry name" value="Znf_B-box"/>
</dbReference>
<dbReference type="InterPro" id="IPR001841">
    <property type="entry name" value="Znf_RING"/>
</dbReference>
<dbReference type="InterPro" id="IPR013083">
    <property type="entry name" value="Znf_RING/FYVE/PHD"/>
</dbReference>
<dbReference type="InterPro" id="IPR017907">
    <property type="entry name" value="Znf_RING_CS"/>
</dbReference>
<dbReference type="PANTHER" id="PTHR24103">
    <property type="entry name" value="E3 UBIQUITIN-PROTEIN LIGASE TRIM"/>
    <property type="match status" value="1"/>
</dbReference>
<dbReference type="Pfam" id="PF00622">
    <property type="entry name" value="SPRY"/>
    <property type="match status" value="1"/>
</dbReference>
<dbReference type="Pfam" id="PF00643">
    <property type="entry name" value="zf-B_box"/>
    <property type="match status" value="1"/>
</dbReference>
<dbReference type="Pfam" id="PF13445">
    <property type="entry name" value="zf-RING_UBOX"/>
    <property type="match status" value="1"/>
</dbReference>
<dbReference type="PRINTS" id="PR01407">
    <property type="entry name" value="BUTYPHLNCDUF"/>
</dbReference>
<dbReference type="SMART" id="SM00336">
    <property type="entry name" value="BBOX"/>
    <property type="match status" value="1"/>
</dbReference>
<dbReference type="SMART" id="SM00184">
    <property type="entry name" value="RING"/>
    <property type="match status" value="1"/>
</dbReference>
<dbReference type="SMART" id="SM00449">
    <property type="entry name" value="SPRY"/>
    <property type="match status" value="1"/>
</dbReference>
<dbReference type="SUPFAM" id="SSF57845">
    <property type="entry name" value="B-box zinc-binding domain"/>
    <property type="match status" value="1"/>
</dbReference>
<dbReference type="SUPFAM" id="SSF49899">
    <property type="entry name" value="Concanavalin A-like lectins/glucanases"/>
    <property type="match status" value="1"/>
</dbReference>
<dbReference type="SUPFAM" id="SSF57850">
    <property type="entry name" value="RING/U-box"/>
    <property type="match status" value="1"/>
</dbReference>
<dbReference type="PROSITE" id="PS50188">
    <property type="entry name" value="B302_SPRY"/>
    <property type="match status" value="1"/>
</dbReference>
<dbReference type="PROSITE" id="PS50119">
    <property type="entry name" value="ZF_BBOX"/>
    <property type="match status" value="1"/>
</dbReference>
<dbReference type="PROSITE" id="PS00518">
    <property type="entry name" value="ZF_RING_1"/>
    <property type="match status" value="1"/>
</dbReference>
<dbReference type="PROSITE" id="PS50089">
    <property type="entry name" value="ZF_RING_2"/>
    <property type="match status" value="1"/>
</dbReference>
<proteinExistence type="evidence at transcript level"/>
<comment type="function">
    <text evidence="3">Capsid-specific restriction factor that prevents infection from non-host-adapted retroviruses. Blocks viral replication early in the life cycle, after viral entry but before reverse transcription. In addition to acting as a capsid-specific restriction factor, also acts as a pattern recognition receptor that activates innate immune signaling in response to the retroviral capsid lattice. Binding to the viral capsid triggers its E3 ubiquitin ligase activity, and in concert with the heterodimeric ubiquitin conjugating enzyme complex UBE2V1-UBE2N (also known as UBC13-UEV1A complex) generates 'Lys-63'-linked polyubiquitin chains, which in turn are catalysts in the autophosphorylation of the MAP3K7/TAK1 complex (includes TAK1, TAB2, and TAB3). Activation of the MAP3K7/TAK1 complex by autophosphorylation results in the induction and expression of NF-kappa-B and MAPK-responsive inflammatory genes, thereby leading to an innate immune response in the infected cell. Plays a role in regulating autophagy through activation of autophagy regulator BECN1 by causing its dissociation from its inhibitors BCL2 and TAB2.</text>
</comment>
<comment type="catalytic activity">
    <reaction>
        <text>S-ubiquitinyl-[E2 ubiquitin-conjugating enzyme]-L-cysteine + [acceptor protein]-L-lysine = [E2 ubiquitin-conjugating enzyme]-L-cysteine + N(6)-ubiquitinyl-[acceptor protein]-L-lysine.</text>
        <dbReference type="EC" id="2.3.2.27"/>
    </reaction>
</comment>
<comment type="pathway">
    <text>Protein modification; protein ubiquitination.</text>
</comment>
<comment type="subunit">
    <text evidence="2 3">Can form homodimers and homotrimers. In addition to lower-order dimerization, also exhibits a higher-order multimerization and both low- and high-order multimerizations are essential for its restriction activity. Interacts with BTBD1 and BTBD2. Interacts with PSMC4, PSMC5, PSMD7 and HSPA8/HSC70. Interacts (via B30.2/SPRY domain) with HSPA1A/B. Interacts with PSMC2, MAP3K7/TAK1, TAB2 and TAB3. Interacts with SQSTM1. Interacts with TRIM6 and TRIM34. Interacts with ULK1 (phosphorylated form), GABARAP, GABARAPL1, GABARAPL2, MAP1LC3A, MAP1LC3C and BECN1.</text>
</comment>
<comment type="subcellular location">
    <subcellularLocation>
        <location evidence="2">Cytoplasm</location>
    </subcellularLocation>
    <subcellularLocation>
        <location evidence="2">Nucleus</location>
    </subcellularLocation>
    <text evidence="2">Predominantly localizes in cytoplasmic bodies. Localization may be influenced by the coexpression of other TRIM proteins, hence partial nuclear localization is observed in the presence of TRIM22 or TRIM27. In cytoplasmic bodies, colocalizes with proteasomal subunits and SQSTM1.</text>
</comment>
<comment type="alternative products">
    <event type="alternative splicing"/>
    <isoform>
        <id>Q5D7I3-1</id>
        <name>1</name>
        <sequence type="displayed"/>
    </isoform>
    <isoform>
        <id>Q5D7I3-2</id>
        <name>2</name>
        <sequence type="described" ref="VSP_022568"/>
    </isoform>
</comment>
<comment type="domain">
    <text evidence="2 3">The B box-type zinc finger domain and the coiled-coil domain contribute to the higher and low order multimerization respectively which is essential for restriction activity. The coiled coil domain is important for higher order multimerization by promoting the initial dimerization.</text>
</comment>
<comment type="domain">
    <text evidence="1">The B30.2/SPRY domain acts as a capsid recognition domain. Polymorphisms in this domain explain the observed species-specific differences among orthologs (By similarity).</text>
</comment>
<comment type="domain">
    <text evidence="1">The RING-type zinc finger domain confers E3 ubiquitin ligase activity and is essential for retrovirus restriction activity, autoubiquitination and higher-order multimerization.</text>
</comment>
<comment type="PTM">
    <text evidence="1">Degraded in a proteasome-independent fashion in the absence of viral infection but in a proteasome-dependent fashion following exposure to restriction sensitive virus.</text>
</comment>
<comment type="PTM">
    <text evidence="1">Autoubiquitinated in a RING finger- and UBE2D2-dependent manner. Monoubiquitinated by TRIM21. Deubiquitinated by Yersinia YopJ. Ubiquitination may not lead to proteasomal degradation (By similarity).</text>
</comment>
<comment type="similarity">
    <text evidence="9">Belongs to the TRIM/RBCC family.</text>
</comment>
<organism>
    <name type="scientific">Erythrocebus patas</name>
    <name type="common">Red guenon</name>
    <name type="synonym">Cercopithecus patas</name>
    <dbReference type="NCBI Taxonomy" id="9538"/>
    <lineage>
        <taxon>Eukaryota</taxon>
        <taxon>Metazoa</taxon>
        <taxon>Chordata</taxon>
        <taxon>Craniata</taxon>
        <taxon>Vertebrata</taxon>
        <taxon>Euteleostomi</taxon>
        <taxon>Mammalia</taxon>
        <taxon>Eutheria</taxon>
        <taxon>Euarchontoglires</taxon>
        <taxon>Primates</taxon>
        <taxon>Haplorrhini</taxon>
        <taxon>Catarrhini</taxon>
        <taxon>Cercopithecidae</taxon>
        <taxon>Cercopithecinae</taxon>
        <taxon>Erythrocebus</taxon>
    </lineage>
</organism>
<gene>
    <name type="primary">TRIM5</name>
</gene>
<name>TRIM5_ERYPA</name>
<sequence>MASGILLNVKEEVTCPICLELLTEPLSLPCGHSFCQACITANHKKSMLYKEEERSCPVCRISYQPENIQPNRHVANIVEKLREVKLSPEEGQKVDHCARHGEKLLLFCQEDRKVICWLCERSQEHRGHHTFLMEEVAQEYHVKLQTALEMLRQKQQEAEKLEADIREEKASWKIQIDYDKTNVLADFEQLREILDWEESNELQYLEKEEEDILKSLTKSETKMVRQTQYVRELISDLEHRLQGSMMELLQGVDGIIKRIENMTLKKPETFHKNQRRVFRAPALKGMLDMFRELTDVRRYWVDVTLAPNNISHVVIAEDKRQVSSRNPQIMYWAQGKLFQSLKNFNYCTGILGSQSITSGKHYWEVDVSKKSAWILGVCAGFQPDAMYDVEQNENYQPKYGYWVIGLQEGVKYSVFQDGSSHTPFAPFIAPLSVIFCPDRVGVFVDYEACTVSFFNITNHGFLIYKFSQCSFSKPVFPYLNPRKCTVPMTLCSPSS</sequence>
<evidence type="ECO:0000250" key="1"/>
<evidence type="ECO:0000250" key="2">
    <source>
        <dbReference type="UniProtKB" id="Q0PF16"/>
    </source>
</evidence>
<evidence type="ECO:0000250" key="3">
    <source>
        <dbReference type="UniProtKB" id="Q9C035"/>
    </source>
</evidence>
<evidence type="ECO:0000255" key="4"/>
<evidence type="ECO:0000255" key="5">
    <source>
        <dbReference type="PROSITE-ProRule" id="PRU00024"/>
    </source>
</evidence>
<evidence type="ECO:0000255" key="6">
    <source>
        <dbReference type="PROSITE-ProRule" id="PRU00175"/>
    </source>
</evidence>
<evidence type="ECO:0000255" key="7">
    <source>
        <dbReference type="PROSITE-ProRule" id="PRU00548"/>
    </source>
</evidence>
<evidence type="ECO:0000303" key="8">
    <source>
    </source>
</evidence>
<evidence type="ECO:0000305" key="9"/>
<keyword id="KW-0007">Acetylation</keyword>
<keyword id="KW-0025">Alternative splicing</keyword>
<keyword id="KW-0051">Antiviral defense</keyword>
<keyword id="KW-0072">Autophagy</keyword>
<keyword id="KW-0175">Coiled coil</keyword>
<keyword id="KW-0963">Cytoplasm</keyword>
<keyword id="KW-0391">Immunity</keyword>
<keyword id="KW-0399">Innate immunity</keyword>
<keyword id="KW-0479">Metal-binding</keyword>
<keyword id="KW-0539">Nucleus</keyword>
<keyword id="KW-0597">Phosphoprotein</keyword>
<keyword id="KW-0808">Transferase</keyword>
<keyword id="KW-0832">Ubl conjugation</keyword>
<keyword id="KW-0833">Ubl conjugation pathway</keyword>
<keyword id="KW-0862">Zinc</keyword>
<keyword id="KW-0863">Zinc-finger</keyword>
<accession>Q5D7I3</accession>
<accession>Q5C8T7</accession>
<feature type="initiator methionine" description="Removed" evidence="3">
    <location>
        <position position="1"/>
    </location>
</feature>
<feature type="chain" id="PRO_0000273457" description="Tripartite motif-containing protein 5">
    <location>
        <begin position="2"/>
        <end position="495"/>
    </location>
</feature>
<feature type="domain" description="B30.2/SPRY" evidence="7">
    <location>
        <begin position="283"/>
        <end position="495"/>
    </location>
</feature>
<feature type="zinc finger region" description="RING-type" evidence="6">
    <location>
        <begin position="15"/>
        <end position="60"/>
    </location>
</feature>
<feature type="zinc finger region" description="B box-type" evidence="5">
    <location>
        <begin position="92"/>
        <end position="133"/>
    </location>
</feature>
<feature type="region of interest" description="Required for interaction with GABARAP and for autophagy" evidence="2">
    <location>
        <begin position="187"/>
        <end position="200"/>
    </location>
</feature>
<feature type="coiled-coil region" evidence="4">
    <location>
        <begin position="137"/>
        <end position="177"/>
    </location>
</feature>
<feature type="binding site" evidence="5">
    <location>
        <position position="97"/>
    </location>
    <ligand>
        <name>Zn(2+)</name>
        <dbReference type="ChEBI" id="CHEBI:29105"/>
    </ligand>
</feature>
<feature type="binding site" evidence="5">
    <location>
        <position position="100"/>
    </location>
    <ligand>
        <name>Zn(2+)</name>
        <dbReference type="ChEBI" id="CHEBI:29105"/>
    </ligand>
</feature>
<feature type="binding site" evidence="5">
    <location>
        <position position="119"/>
    </location>
    <ligand>
        <name>Zn(2+)</name>
        <dbReference type="ChEBI" id="CHEBI:29105"/>
    </ligand>
</feature>
<feature type="binding site" evidence="5">
    <location>
        <position position="125"/>
    </location>
    <ligand>
        <name>Zn(2+)</name>
        <dbReference type="ChEBI" id="CHEBI:29105"/>
    </ligand>
</feature>
<feature type="modified residue" description="N-acetylalanine" evidence="3">
    <location>
        <position position="2"/>
    </location>
</feature>
<feature type="modified residue" description="Phosphoserine" evidence="3">
    <location>
        <position position="87"/>
    </location>
</feature>
<feature type="splice variant" id="VSP_022568" description="In isoform 2." evidence="8">
    <original>QGKLFQSLK</original>
    <variation>PGSLFGSLTNFNYCTGVLGSQSITSGKLT</variation>
    <location>
        <begin position="334"/>
        <end position="342"/>
    </location>
</feature>
<feature type="sequence conflict" description="In Ref. 2; AAW72447." evidence="9" ref="2">
    <original>L</original>
    <variation>V</variation>
    <location>
        <position position="7"/>
    </location>
</feature>
<feature type="sequence conflict" description="In Ref. 2; AAW72447." evidence="9" ref="2">
    <original>K</original>
    <variation>M</variation>
    <location>
        <position position="10"/>
    </location>
</feature>
<feature type="sequence conflict" description="In Ref. 2; AAW72447." evidence="9" ref="2">
    <original>P</original>
    <variation>S</variation>
    <location>
        <position position="57"/>
    </location>
</feature>
<feature type="sequence conflict" description="In Ref. 2; AAW72447." evidence="9" ref="2">
    <original>H</original>
    <variation>R</variation>
    <location>
        <position position="96"/>
    </location>
</feature>
<feature type="sequence conflict" description="In Ref. 2; AAW72447." evidence="9" ref="2">
    <original>R</original>
    <variation>S</variation>
    <location>
        <position position="112"/>
    </location>
</feature>
<feature type="sequence conflict" description="In Ref. 2; AAW72447." evidence="9" ref="2">
    <original>L</original>
    <variation>S</variation>
    <location>
        <position position="184"/>
    </location>
</feature>
<feature type="sequence conflict" description="In Ref. 2; AAW72447." evidence="9" ref="2">
    <original>Y</original>
    <variation>N</variation>
    <location>
        <position position="204"/>
    </location>
</feature>
<feature type="sequence conflict" description="In Ref. 2; AAW72447." evidence="9" ref="2">
    <original>K</original>
    <variation>E</variation>
    <location>
        <position position="222"/>
    </location>
</feature>
<feature type="sequence conflict" description="In Ref. 2; AAW72447." evidence="9" ref="2">
    <original>R</original>
    <variation>Q</variation>
    <location>
        <position position="225"/>
    </location>
</feature>
<feature type="sequence conflict" description="In Ref. 2; AAW72447." evidence="9" ref="2">
    <original>V</original>
    <variation>M</variation>
    <location>
        <position position="230"/>
    </location>
</feature>
<feature type="sequence conflict" description="In Ref. 2; AAW72447." evidence="9" ref="2">
    <original>S</original>
    <variation>T</variation>
    <location>
        <position position="244"/>
    </location>
</feature>
<feature type="sequence conflict" description="In Ref. 2; AAW72447." evidence="9" ref="2">
    <original>E</original>
    <variation>K</variation>
    <location>
        <position position="268"/>
    </location>
</feature>
<feature type="sequence conflict" description="In Ref. 2; AAW72447." evidence="9" ref="2">
    <original>A</original>
    <variation>D</variation>
    <location>
        <position position="282"/>
    </location>
</feature>
<feature type="sequence conflict" description="In Ref. 2; AAW72447." evidence="9" ref="2">
    <original>VRR</original>
    <variation>ARC</variation>
    <location>
        <begin position="296"/>
        <end position="298"/>
    </location>
</feature>
<feature type="sequence conflict" description="In Ref. 2; AAW72447." evidence="9" ref="2">
    <original>V</original>
    <variation>A</variation>
    <location>
        <position position="313"/>
    </location>
</feature>
<feature type="sequence conflict" description="In Ref. 2; AAW72447." evidence="9" ref="2">
    <original>I</original>
    <variation>V</variation>
    <location>
        <position position="350"/>
    </location>
</feature>
<feature type="sequence conflict" description="In Ref. 2; AAW72447." evidence="9" ref="2">
    <original>MYDV</original>
    <variation>TYNI</variation>
    <location>
        <begin position="386"/>
        <end position="389"/>
    </location>
</feature>
<feature type="sequence conflict" description="In Ref. 2; AAW72447." evidence="9" ref="2">
    <original>V</original>
    <variation>D</variation>
    <location>
        <position position="410"/>
    </location>
</feature>
<feature type="sequence conflict" description="In Ref. 2; AAW72447." evidence="9" ref="2">
    <original>FC</original>
    <variation>IG</variation>
    <location>
        <begin position="435"/>
        <end position="436"/>
    </location>
</feature>
<protein>
    <recommendedName>
        <fullName>Tripartite motif-containing protein 5</fullName>
        <ecNumber>2.3.2.27</ecNumber>
    </recommendedName>
    <alternativeName>
        <fullName evidence="9">RING-type E3 ubiquitin transferase TRIM5</fullName>
    </alternativeName>
    <alternativeName>
        <fullName>TRIM5alpha</fullName>
    </alternativeName>
</protein>
<reference key="1">
    <citation type="journal article" date="2005" name="J. Virol.">
        <title>The B30.2(SPRY) domain of the retroviral restriction factor TRIM5alpha exhibits lineage-specific length and sequence variation in primates.</title>
        <authorList>
            <person name="Song B."/>
            <person name="Gold B."/>
            <person name="O'Huigin C."/>
            <person name="Javanbakht H."/>
            <person name="Li X."/>
            <person name="Stremlau M."/>
            <person name="Winkler C."/>
            <person name="Dean M."/>
            <person name="Sodroski J."/>
        </authorList>
    </citation>
    <scope>NUCLEOTIDE SEQUENCE [MRNA] (ISOFORM 2)</scope>
    <source>
        <strain>B16</strain>
    </source>
</reference>
<reference key="2">
    <citation type="journal article" date="2005" name="Proc. Natl. Acad. Sci. U.S.A.">
        <title>Positive selection of primate TRIM5alpha identifies a critical species-specific retroviral restriction domain.</title>
        <authorList>
            <person name="Sawyer S.L."/>
            <person name="Wu L.I."/>
            <person name="Emerman M."/>
            <person name="Malik H.S."/>
        </authorList>
    </citation>
    <scope>NUCLEOTIDE SEQUENCE [GENOMIC DNA]</scope>
    <scope>ALTERNATIVE SPLICING (ISOFORM 1)</scope>
</reference>